<organism>
    <name type="scientific">Yersinia pestis bv. Antiqua (strain Antiqua)</name>
    <dbReference type="NCBI Taxonomy" id="360102"/>
    <lineage>
        <taxon>Bacteria</taxon>
        <taxon>Pseudomonadati</taxon>
        <taxon>Pseudomonadota</taxon>
        <taxon>Gammaproteobacteria</taxon>
        <taxon>Enterobacterales</taxon>
        <taxon>Yersiniaceae</taxon>
        <taxon>Yersinia</taxon>
    </lineage>
</organism>
<reference key="1">
    <citation type="journal article" date="2006" name="J. Bacteriol.">
        <title>Complete genome sequence of Yersinia pestis strains Antiqua and Nepal516: evidence of gene reduction in an emerging pathogen.</title>
        <authorList>
            <person name="Chain P.S.G."/>
            <person name="Hu P."/>
            <person name="Malfatti S.A."/>
            <person name="Radnedge L."/>
            <person name="Larimer F."/>
            <person name="Vergez L.M."/>
            <person name="Worsham P."/>
            <person name="Chu M.C."/>
            <person name="Andersen G.L."/>
        </authorList>
    </citation>
    <scope>NUCLEOTIDE SEQUENCE [LARGE SCALE GENOMIC DNA]</scope>
    <source>
        <strain>Antiqua</strain>
    </source>
</reference>
<evidence type="ECO:0000255" key="1">
    <source>
        <dbReference type="HAMAP-Rule" id="MF_00688"/>
    </source>
</evidence>
<dbReference type="EC" id="2.3.2.6" evidence="1"/>
<dbReference type="EMBL" id="CP000308">
    <property type="protein sequence ID" value="ABG12629.1"/>
    <property type="molecule type" value="Genomic_DNA"/>
</dbReference>
<dbReference type="RefSeq" id="WP_011566242.1">
    <property type="nucleotide sequence ID" value="NC_008150.1"/>
</dbReference>
<dbReference type="SMR" id="Q1CA93"/>
<dbReference type="KEGG" id="ypa:YPA_0661"/>
<dbReference type="Proteomes" id="UP000001971">
    <property type="component" value="Chromosome"/>
</dbReference>
<dbReference type="GO" id="GO:0005737">
    <property type="term" value="C:cytoplasm"/>
    <property type="evidence" value="ECO:0007669"/>
    <property type="project" value="UniProtKB-SubCell"/>
</dbReference>
<dbReference type="GO" id="GO:0008914">
    <property type="term" value="F:leucyl-tRNA--protein transferase activity"/>
    <property type="evidence" value="ECO:0007669"/>
    <property type="project" value="UniProtKB-UniRule"/>
</dbReference>
<dbReference type="GO" id="GO:0030163">
    <property type="term" value="P:protein catabolic process"/>
    <property type="evidence" value="ECO:0007669"/>
    <property type="project" value="UniProtKB-UniRule"/>
</dbReference>
<dbReference type="FunFam" id="3.30.70.3550:FF:000001">
    <property type="entry name" value="Leucyl/phenylalanyl-tRNA--protein transferase"/>
    <property type="match status" value="1"/>
</dbReference>
<dbReference type="FunFam" id="3.40.630.70:FF:000001">
    <property type="entry name" value="Leucyl/phenylalanyl-tRNA--protein transferase"/>
    <property type="match status" value="1"/>
</dbReference>
<dbReference type="Gene3D" id="3.40.630.70">
    <property type="entry name" value="Leucyl/phenylalanyl-tRNA-protein transferase, C-terminal domain"/>
    <property type="match status" value="1"/>
</dbReference>
<dbReference type="Gene3D" id="3.30.70.3550">
    <property type="entry name" value="Leucyl/phenylalanyl-tRNA-protein transferase, N-terminal domain"/>
    <property type="match status" value="1"/>
</dbReference>
<dbReference type="HAMAP" id="MF_00688">
    <property type="entry name" value="Leu_Phe_trans"/>
    <property type="match status" value="1"/>
</dbReference>
<dbReference type="InterPro" id="IPR016181">
    <property type="entry name" value="Acyl_CoA_acyltransferase"/>
</dbReference>
<dbReference type="InterPro" id="IPR004616">
    <property type="entry name" value="Leu/Phe-tRNA_Trfase"/>
</dbReference>
<dbReference type="InterPro" id="IPR042203">
    <property type="entry name" value="Leu/Phe-tRNA_Trfase_C"/>
</dbReference>
<dbReference type="InterPro" id="IPR042221">
    <property type="entry name" value="Leu/Phe-tRNA_Trfase_N"/>
</dbReference>
<dbReference type="NCBIfam" id="TIGR00667">
    <property type="entry name" value="aat"/>
    <property type="match status" value="1"/>
</dbReference>
<dbReference type="PANTHER" id="PTHR30098">
    <property type="entry name" value="LEUCYL/PHENYLALANYL-TRNA--PROTEIN TRANSFERASE"/>
    <property type="match status" value="1"/>
</dbReference>
<dbReference type="PANTHER" id="PTHR30098:SF2">
    <property type="entry name" value="LEUCYL_PHENYLALANYL-TRNA--PROTEIN TRANSFERASE"/>
    <property type="match status" value="1"/>
</dbReference>
<dbReference type="Pfam" id="PF03588">
    <property type="entry name" value="Leu_Phe_trans"/>
    <property type="match status" value="1"/>
</dbReference>
<dbReference type="SUPFAM" id="SSF55729">
    <property type="entry name" value="Acyl-CoA N-acyltransferases (Nat)"/>
    <property type="match status" value="1"/>
</dbReference>
<comment type="function">
    <text evidence="1">Functions in the N-end rule pathway of protein degradation where it conjugates Leu, Phe and, less efficiently, Met from aminoacyl-tRNAs to the N-termini of proteins containing an N-terminal arginine or lysine.</text>
</comment>
<comment type="catalytic activity">
    <reaction evidence="1">
        <text>N-terminal L-lysyl-[protein] + L-leucyl-tRNA(Leu) = N-terminal L-leucyl-L-lysyl-[protein] + tRNA(Leu) + H(+)</text>
        <dbReference type="Rhea" id="RHEA:12340"/>
        <dbReference type="Rhea" id="RHEA-COMP:9613"/>
        <dbReference type="Rhea" id="RHEA-COMP:9622"/>
        <dbReference type="Rhea" id="RHEA-COMP:12670"/>
        <dbReference type="Rhea" id="RHEA-COMP:12671"/>
        <dbReference type="ChEBI" id="CHEBI:15378"/>
        <dbReference type="ChEBI" id="CHEBI:65249"/>
        <dbReference type="ChEBI" id="CHEBI:78442"/>
        <dbReference type="ChEBI" id="CHEBI:78494"/>
        <dbReference type="ChEBI" id="CHEBI:133043"/>
        <dbReference type="EC" id="2.3.2.6"/>
    </reaction>
</comment>
<comment type="catalytic activity">
    <reaction evidence="1">
        <text>N-terminal L-arginyl-[protein] + L-leucyl-tRNA(Leu) = N-terminal L-leucyl-L-arginyl-[protein] + tRNA(Leu) + H(+)</text>
        <dbReference type="Rhea" id="RHEA:50416"/>
        <dbReference type="Rhea" id="RHEA-COMP:9613"/>
        <dbReference type="Rhea" id="RHEA-COMP:9622"/>
        <dbReference type="Rhea" id="RHEA-COMP:12672"/>
        <dbReference type="Rhea" id="RHEA-COMP:12673"/>
        <dbReference type="ChEBI" id="CHEBI:15378"/>
        <dbReference type="ChEBI" id="CHEBI:64719"/>
        <dbReference type="ChEBI" id="CHEBI:78442"/>
        <dbReference type="ChEBI" id="CHEBI:78494"/>
        <dbReference type="ChEBI" id="CHEBI:133044"/>
        <dbReference type="EC" id="2.3.2.6"/>
    </reaction>
</comment>
<comment type="catalytic activity">
    <reaction evidence="1">
        <text>L-phenylalanyl-tRNA(Phe) + an N-terminal L-alpha-aminoacyl-[protein] = an N-terminal L-phenylalanyl-L-alpha-aminoacyl-[protein] + tRNA(Phe)</text>
        <dbReference type="Rhea" id="RHEA:43632"/>
        <dbReference type="Rhea" id="RHEA-COMP:9668"/>
        <dbReference type="Rhea" id="RHEA-COMP:9699"/>
        <dbReference type="Rhea" id="RHEA-COMP:10636"/>
        <dbReference type="Rhea" id="RHEA-COMP:10637"/>
        <dbReference type="ChEBI" id="CHEBI:78442"/>
        <dbReference type="ChEBI" id="CHEBI:78531"/>
        <dbReference type="ChEBI" id="CHEBI:78597"/>
        <dbReference type="ChEBI" id="CHEBI:83561"/>
        <dbReference type="EC" id="2.3.2.6"/>
    </reaction>
</comment>
<comment type="subcellular location">
    <subcellularLocation>
        <location evidence="1">Cytoplasm</location>
    </subcellularLocation>
</comment>
<comment type="similarity">
    <text evidence="1">Belongs to the L/F-transferase family.</text>
</comment>
<keyword id="KW-0012">Acyltransferase</keyword>
<keyword id="KW-0963">Cytoplasm</keyword>
<keyword id="KW-0808">Transferase</keyword>
<name>LFTR_YERPA</name>
<feature type="chain" id="PRO_0000258114" description="Leucyl/phenylalanyl-tRNA--protein transferase">
    <location>
        <begin position="1"/>
        <end position="261"/>
    </location>
</feature>
<protein>
    <recommendedName>
        <fullName evidence="1">Leucyl/phenylalanyl-tRNA--protein transferase</fullName>
        <ecNumber evidence="1">2.3.2.6</ecNumber>
    </recommendedName>
    <alternativeName>
        <fullName evidence="1">L/F-transferase</fullName>
    </alternativeName>
    <alternativeName>
        <fullName evidence="1">Leucyltransferase</fullName>
    </alternativeName>
    <alternativeName>
        <fullName evidence="1">Phenyalanyltransferase</fullName>
    </alternativeName>
</protein>
<accession>Q1CA93</accession>
<gene>
    <name evidence="1" type="primary">aat</name>
    <name type="ordered locus">YPA_0661</name>
</gene>
<sequence length="261" mass="29462">MRVTQLSSQSFIFPSPELALREPNGLLALGGDLTAPRLLAAYQRGIFPWFNPGEMILWWSPDPRAVLFPEDLHISRSMRRFIRHCPYRFTLNHAFADVISACATERDEGTWIGRDVQQAYCQLHALGHAHSLEVWLENELVGGLYGVAVGAVFCGESMFSRADNASKSALMVFCHHFTQHGGELIDCQVLNAHTASLGAVEIPRNFFLQQLSQLQFSPLPAECWLPQSLIFHPRCSKDQPFKTPHIRLYPPLAGRLILLKW</sequence>
<proteinExistence type="inferred from homology"/>